<protein>
    <recommendedName>
        <fullName evidence="1">UPF0102 protein Shew_0226</fullName>
    </recommendedName>
</protein>
<keyword id="KW-1185">Reference proteome</keyword>
<proteinExistence type="inferred from homology"/>
<comment type="similarity">
    <text evidence="1">Belongs to the UPF0102 family.</text>
</comment>
<reference key="1">
    <citation type="submission" date="2007-03" db="EMBL/GenBank/DDBJ databases">
        <title>Complete sequence of Shewanella loihica PV-4.</title>
        <authorList>
            <consortium name="US DOE Joint Genome Institute"/>
            <person name="Copeland A."/>
            <person name="Lucas S."/>
            <person name="Lapidus A."/>
            <person name="Barry K."/>
            <person name="Detter J.C."/>
            <person name="Glavina del Rio T."/>
            <person name="Hammon N."/>
            <person name="Israni S."/>
            <person name="Dalin E."/>
            <person name="Tice H."/>
            <person name="Pitluck S."/>
            <person name="Chain P."/>
            <person name="Malfatti S."/>
            <person name="Shin M."/>
            <person name="Vergez L."/>
            <person name="Schmutz J."/>
            <person name="Larimer F."/>
            <person name="Land M."/>
            <person name="Hauser L."/>
            <person name="Kyrpides N."/>
            <person name="Mikhailova N."/>
            <person name="Romine M.F."/>
            <person name="Serres G."/>
            <person name="Fredrickson J."/>
            <person name="Tiedje J."/>
            <person name="Richardson P."/>
        </authorList>
    </citation>
    <scope>NUCLEOTIDE SEQUENCE [LARGE SCALE GENOMIC DNA]</scope>
    <source>
        <strain>ATCC BAA-1088 / PV-4</strain>
    </source>
</reference>
<feature type="chain" id="PRO_0000336259" description="UPF0102 protein Shew_0226">
    <location>
        <begin position="1"/>
        <end position="114"/>
    </location>
</feature>
<gene>
    <name type="ordered locus">Shew_0226</name>
</gene>
<sequence>MTSAEHLTKGQQAEDRALAYLEQQGLKLVERNVRYPFGEIDLIMRQGHKWIFIEVKYRQSKQFGGALQAVSRGKIARLNRAASHYMQLNQIDAQCRFDLLAIDGDDIQWITNAF</sequence>
<evidence type="ECO:0000255" key="1">
    <source>
        <dbReference type="HAMAP-Rule" id="MF_00048"/>
    </source>
</evidence>
<organism>
    <name type="scientific">Shewanella loihica (strain ATCC BAA-1088 / PV-4)</name>
    <dbReference type="NCBI Taxonomy" id="323850"/>
    <lineage>
        <taxon>Bacteria</taxon>
        <taxon>Pseudomonadati</taxon>
        <taxon>Pseudomonadota</taxon>
        <taxon>Gammaproteobacteria</taxon>
        <taxon>Alteromonadales</taxon>
        <taxon>Shewanellaceae</taxon>
        <taxon>Shewanella</taxon>
    </lineage>
</organism>
<name>Y226_SHELP</name>
<accession>A3Q9F0</accession>
<dbReference type="EMBL" id="CP000606">
    <property type="protein sequence ID" value="ABO22098.1"/>
    <property type="molecule type" value="Genomic_DNA"/>
</dbReference>
<dbReference type="RefSeq" id="WP_011864033.1">
    <property type="nucleotide sequence ID" value="NC_009092.1"/>
</dbReference>
<dbReference type="SMR" id="A3Q9F0"/>
<dbReference type="STRING" id="323850.Shew_0226"/>
<dbReference type="KEGG" id="slo:Shew_0226"/>
<dbReference type="eggNOG" id="COG0792">
    <property type="taxonomic scope" value="Bacteria"/>
</dbReference>
<dbReference type="HOGENOM" id="CLU_115353_1_0_6"/>
<dbReference type="OrthoDB" id="9794876at2"/>
<dbReference type="Proteomes" id="UP000001558">
    <property type="component" value="Chromosome"/>
</dbReference>
<dbReference type="GO" id="GO:0003676">
    <property type="term" value="F:nucleic acid binding"/>
    <property type="evidence" value="ECO:0007669"/>
    <property type="project" value="InterPro"/>
</dbReference>
<dbReference type="CDD" id="cd20736">
    <property type="entry name" value="PoNe_Nuclease"/>
    <property type="match status" value="1"/>
</dbReference>
<dbReference type="Gene3D" id="3.40.1350.10">
    <property type="match status" value="1"/>
</dbReference>
<dbReference type="HAMAP" id="MF_00048">
    <property type="entry name" value="UPF0102"/>
    <property type="match status" value="1"/>
</dbReference>
<dbReference type="InterPro" id="IPR011335">
    <property type="entry name" value="Restrct_endonuc-II-like"/>
</dbReference>
<dbReference type="InterPro" id="IPR011856">
    <property type="entry name" value="tRNA_endonuc-like_dom_sf"/>
</dbReference>
<dbReference type="InterPro" id="IPR003509">
    <property type="entry name" value="UPF0102_YraN-like"/>
</dbReference>
<dbReference type="NCBIfam" id="NF009150">
    <property type="entry name" value="PRK12497.1-3"/>
    <property type="match status" value="1"/>
</dbReference>
<dbReference type="NCBIfam" id="TIGR00252">
    <property type="entry name" value="YraN family protein"/>
    <property type="match status" value="1"/>
</dbReference>
<dbReference type="PANTHER" id="PTHR34039">
    <property type="entry name" value="UPF0102 PROTEIN YRAN"/>
    <property type="match status" value="1"/>
</dbReference>
<dbReference type="PANTHER" id="PTHR34039:SF1">
    <property type="entry name" value="UPF0102 PROTEIN YRAN"/>
    <property type="match status" value="1"/>
</dbReference>
<dbReference type="Pfam" id="PF02021">
    <property type="entry name" value="UPF0102"/>
    <property type="match status" value="1"/>
</dbReference>
<dbReference type="SUPFAM" id="SSF52980">
    <property type="entry name" value="Restriction endonuclease-like"/>
    <property type="match status" value="1"/>
</dbReference>